<accession>Q83QQ5</accession>
<accession>Q7UC49</accession>
<dbReference type="EC" id="4.2.3.5" evidence="1"/>
<dbReference type="EMBL" id="AE005674">
    <property type="protein sequence ID" value="AAN43918.2"/>
    <property type="molecule type" value="Genomic_DNA"/>
</dbReference>
<dbReference type="EMBL" id="AE014073">
    <property type="protein sequence ID" value="AAP17736.1"/>
    <property type="molecule type" value="Genomic_DNA"/>
</dbReference>
<dbReference type="RefSeq" id="NP_708211.2">
    <property type="nucleotide sequence ID" value="NC_004337.2"/>
</dbReference>
<dbReference type="RefSeq" id="WP_000918467.1">
    <property type="nucleotide sequence ID" value="NZ_WPGW01000016.1"/>
</dbReference>
<dbReference type="SMR" id="Q83QQ5"/>
<dbReference type="STRING" id="198214.SF2405"/>
<dbReference type="PaxDb" id="198214-SF2405"/>
<dbReference type="GeneID" id="1027234"/>
<dbReference type="KEGG" id="sfl:SF2405"/>
<dbReference type="KEGG" id="sfx:S2540"/>
<dbReference type="PATRIC" id="fig|198214.7.peg.2872"/>
<dbReference type="HOGENOM" id="CLU_034547_0_2_6"/>
<dbReference type="UniPathway" id="UPA00053">
    <property type="reaction ID" value="UER00090"/>
</dbReference>
<dbReference type="Proteomes" id="UP000001006">
    <property type="component" value="Chromosome"/>
</dbReference>
<dbReference type="Proteomes" id="UP000002673">
    <property type="component" value="Chromosome"/>
</dbReference>
<dbReference type="GO" id="GO:0005829">
    <property type="term" value="C:cytosol"/>
    <property type="evidence" value="ECO:0007669"/>
    <property type="project" value="TreeGrafter"/>
</dbReference>
<dbReference type="GO" id="GO:0004107">
    <property type="term" value="F:chorismate synthase activity"/>
    <property type="evidence" value="ECO:0007669"/>
    <property type="project" value="UniProtKB-UniRule"/>
</dbReference>
<dbReference type="GO" id="GO:0010181">
    <property type="term" value="F:FMN binding"/>
    <property type="evidence" value="ECO:0007669"/>
    <property type="project" value="TreeGrafter"/>
</dbReference>
<dbReference type="GO" id="GO:0008652">
    <property type="term" value="P:amino acid biosynthetic process"/>
    <property type="evidence" value="ECO:0007669"/>
    <property type="project" value="UniProtKB-KW"/>
</dbReference>
<dbReference type="GO" id="GO:0009073">
    <property type="term" value="P:aromatic amino acid family biosynthetic process"/>
    <property type="evidence" value="ECO:0007669"/>
    <property type="project" value="UniProtKB-KW"/>
</dbReference>
<dbReference type="GO" id="GO:0009423">
    <property type="term" value="P:chorismate biosynthetic process"/>
    <property type="evidence" value="ECO:0007669"/>
    <property type="project" value="UniProtKB-UniRule"/>
</dbReference>
<dbReference type="CDD" id="cd07304">
    <property type="entry name" value="Chorismate_synthase"/>
    <property type="match status" value="1"/>
</dbReference>
<dbReference type="FunFam" id="3.60.150.10:FF:000001">
    <property type="entry name" value="Chorismate synthase"/>
    <property type="match status" value="1"/>
</dbReference>
<dbReference type="Gene3D" id="3.60.150.10">
    <property type="entry name" value="Chorismate synthase AroC"/>
    <property type="match status" value="1"/>
</dbReference>
<dbReference type="HAMAP" id="MF_00300">
    <property type="entry name" value="Chorismate_synth"/>
    <property type="match status" value="1"/>
</dbReference>
<dbReference type="InterPro" id="IPR000453">
    <property type="entry name" value="Chorismate_synth"/>
</dbReference>
<dbReference type="InterPro" id="IPR035904">
    <property type="entry name" value="Chorismate_synth_AroC_sf"/>
</dbReference>
<dbReference type="InterPro" id="IPR020541">
    <property type="entry name" value="Chorismate_synthase_CS"/>
</dbReference>
<dbReference type="NCBIfam" id="TIGR00033">
    <property type="entry name" value="aroC"/>
    <property type="match status" value="1"/>
</dbReference>
<dbReference type="NCBIfam" id="NF003793">
    <property type="entry name" value="PRK05382.1"/>
    <property type="match status" value="1"/>
</dbReference>
<dbReference type="PANTHER" id="PTHR21085">
    <property type="entry name" value="CHORISMATE SYNTHASE"/>
    <property type="match status" value="1"/>
</dbReference>
<dbReference type="PANTHER" id="PTHR21085:SF0">
    <property type="entry name" value="CHORISMATE SYNTHASE"/>
    <property type="match status" value="1"/>
</dbReference>
<dbReference type="Pfam" id="PF01264">
    <property type="entry name" value="Chorismate_synt"/>
    <property type="match status" value="1"/>
</dbReference>
<dbReference type="PIRSF" id="PIRSF001456">
    <property type="entry name" value="Chorismate_synth"/>
    <property type="match status" value="1"/>
</dbReference>
<dbReference type="SUPFAM" id="SSF103263">
    <property type="entry name" value="Chorismate synthase, AroC"/>
    <property type="match status" value="1"/>
</dbReference>
<dbReference type="PROSITE" id="PS00787">
    <property type="entry name" value="CHORISMATE_SYNTHASE_1"/>
    <property type="match status" value="1"/>
</dbReference>
<dbReference type="PROSITE" id="PS00788">
    <property type="entry name" value="CHORISMATE_SYNTHASE_2"/>
    <property type="match status" value="1"/>
</dbReference>
<dbReference type="PROSITE" id="PS00789">
    <property type="entry name" value="CHORISMATE_SYNTHASE_3"/>
    <property type="match status" value="1"/>
</dbReference>
<sequence length="361" mass="39171">MAGNTIGQLFRVTTFGESHGLALGCIVDGVPPGIPLTEADLQHDLDRRRPGTSRYTTQRREPDQVKILSGVFEGVTTGTSIGLLIENTDQRSQDYSAIKDVFRPGHADYTYEQKYGLRDYRGGGRSSARETAMRVAAGAIAKKYLAEKFGIEIRGCLTQMGDIPLEIKDWSLVEQNPFFCPDPDKIDALDELMRALKKEGDSIGAKVTVVASGVPAGLGEPVFDRLDADIAHALMSINAVKGVEIGDGFDVVALRGSQNRDEITKDGFQSNHAGGIFGGISSGQQIIAHMALKPTSSITVPGRTINRFGEEVEMITKGRHDPCVGIRAVPIAEAMLAIVLMDHLLRQRAQNADVKTDIPRW</sequence>
<proteinExistence type="inferred from homology"/>
<evidence type="ECO:0000255" key="1">
    <source>
        <dbReference type="HAMAP-Rule" id="MF_00300"/>
    </source>
</evidence>
<feature type="chain" id="PRO_1000022556" description="Chorismate synthase">
    <location>
        <begin position="1"/>
        <end position="361"/>
    </location>
</feature>
<feature type="binding site" evidence="1">
    <location>
        <position position="48"/>
    </location>
    <ligand>
        <name>NADP(+)</name>
        <dbReference type="ChEBI" id="CHEBI:58349"/>
    </ligand>
</feature>
<feature type="binding site" evidence="1">
    <location>
        <position position="54"/>
    </location>
    <ligand>
        <name>NADP(+)</name>
        <dbReference type="ChEBI" id="CHEBI:58349"/>
    </ligand>
</feature>
<feature type="binding site" evidence="1">
    <location>
        <begin position="125"/>
        <end position="127"/>
    </location>
    <ligand>
        <name>FMN</name>
        <dbReference type="ChEBI" id="CHEBI:58210"/>
    </ligand>
</feature>
<feature type="binding site" evidence="1">
    <location>
        <begin position="238"/>
        <end position="239"/>
    </location>
    <ligand>
        <name>FMN</name>
        <dbReference type="ChEBI" id="CHEBI:58210"/>
    </ligand>
</feature>
<feature type="binding site" evidence="1">
    <location>
        <position position="278"/>
    </location>
    <ligand>
        <name>FMN</name>
        <dbReference type="ChEBI" id="CHEBI:58210"/>
    </ligand>
</feature>
<feature type="binding site" evidence="1">
    <location>
        <begin position="293"/>
        <end position="297"/>
    </location>
    <ligand>
        <name>FMN</name>
        <dbReference type="ChEBI" id="CHEBI:58210"/>
    </ligand>
</feature>
<feature type="binding site" evidence="1">
    <location>
        <position position="319"/>
    </location>
    <ligand>
        <name>FMN</name>
        <dbReference type="ChEBI" id="CHEBI:58210"/>
    </ligand>
</feature>
<name>AROC_SHIFL</name>
<reference key="1">
    <citation type="journal article" date="2002" name="Nucleic Acids Res.">
        <title>Genome sequence of Shigella flexneri 2a: insights into pathogenicity through comparison with genomes of Escherichia coli K12 and O157.</title>
        <authorList>
            <person name="Jin Q."/>
            <person name="Yuan Z."/>
            <person name="Xu J."/>
            <person name="Wang Y."/>
            <person name="Shen Y."/>
            <person name="Lu W."/>
            <person name="Wang J."/>
            <person name="Liu H."/>
            <person name="Yang J."/>
            <person name="Yang F."/>
            <person name="Zhang X."/>
            <person name="Zhang J."/>
            <person name="Yang G."/>
            <person name="Wu H."/>
            <person name="Qu D."/>
            <person name="Dong J."/>
            <person name="Sun L."/>
            <person name="Xue Y."/>
            <person name="Zhao A."/>
            <person name="Gao Y."/>
            <person name="Zhu J."/>
            <person name="Kan B."/>
            <person name="Ding K."/>
            <person name="Chen S."/>
            <person name="Cheng H."/>
            <person name="Yao Z."/>
            <person name="He B."/>
            <person name="Chen R."/>
            <person name="Ma D."/>
            <person name="Qiang B."/>
            <person name="Wen Y."/>
            <person name="Hou Y."/>
            <person name="Yu J."/>
        </authorList>
    </citation>
    <scope>NUCLEOTIDE SEQUENCE [LARGE SCALE GENOMIC DNA]</scope>
    <source>
        <strain>301 / Serotype 2a</strain>
    </source>
</reference>
<reference key="2">
    <citation type="journal article" date="2003" name="Infect. Immun.">
        <title>Complete genome sequence and comparative genomics of Shigella flexneri serotype 2a strain 2457T.</title>
        <authorList>
            <person name="Wei J."/>
            <person name="Goldberg M.B."/>
            <person name="Burland V."/>
            <person name="Venkatesan M.M."/>
            <person name="Deng W."/>
            <person name="Fournier G."/>
            <person name="Mayhew G.F."/>
            <person name="Plunkett G. III"/>
            <person name="Rose D.J."/>
            <person name="Darling A."/>
            <person name="Mau B."/>
            <person name="Perna N.T."/>
            <person name="Payne S.M."/>
            <person name="Runyen-Janecky L.J."/>
            <person name="Zhou S."/>
            <person name="Schwartz D.C."/>
            <person name="Blattner F.R."/>
        </authorList>
    </citation>
    <scope>NUCLEOTIDE SEQUENCE [LARGE SCALE GENOMIC DNA]</scope>
    <source>
        <strain>ATCC 700930 / 2457T / Serotype 2a</strain>
    </source>
</reference>
<protein>
    <recommendedName>
        <fullName evidence="1">Chorismate synthase</fullName>
        <shortName evidence="1">CS</shortName>
        <ecNumber evidence="1">4.2.3.5</ecNumber>
    </recommendedName>
    <alternativeName>
        <fullName evidence="1">5-enolpyruvylshikimate-3-phosphate phospholyase</fullName>
    </alternativeName>
</protein>
<organism>
    <name type="scientific">Shigella flexneri</name>
    <dbReference type="NCBI Taxonomy" id="623"/>
    <lineage>
        <taxon>Bacteria</taxon>
        <taxon>Pseudomonadati</taxon>
        <taxon>Pseudomonadota</taxon>
        <taxon>Gammaproteobacteria</taxon>
        <taxon>Enterobacterales</taxon>
        <taxon>Enterobacteriaceae</taxon>
        <taxon>Shigella</taxon>
    </lineage>
</organism>
<gene>
    <name evidence="1" type="primary">aroC</name>
    <name type="ordered locus">SF2405</name>
    <name type="ordered locus">S2540</name>
</gene>
<comment type="function">
    <text evidence="1">Catalyzes the anti-1,4-elimination of the C-3 phosphate and the C-6 proR hydrogen from 5-enolpyruvylshikimate-3-phosphate (EPSP) to yield chorismate, which is the branch point compound that serves as the starting substrate for the three terminal pathways of aromatic amino acid biosynthesis. This reaction introduces a second double bond into the aromatic ring system.</text>
</comment>
<comment type="catalytic activity">
    <reaction evidence="1">
        <text>5-O-(1-carboxyvinyl)-3-phosphoshikimate = chorismate + phosphate</text>
        <dbReference type="Rhea" id="RHEA:21020"/>
        <dbReference type="ChEBI" id="CHEBI:29748"/>
        <dbReference type="ChEBI" id="CHEBI:43474"/>
        <dbReference type="ChEBI" id="CHEBI:57701"/>
        <dbReference type="EC" id="4.2.3.5"/>
    </reaction>
</comment>
<comment type="cofactor">
    <cofactor evidence="1">
        <name>FMNH2</name>
        <dbReference type="ChEBI" id="CHEBI:57618"/>
    </cofactor>
    <text evidence="1">Reduced FMN (FMNH(2)).</text>
</comment>
<comment type="pathway">
    <text evidence="1">Metabolic intermediate biosynthesis; chorismate biosynthesis; chorismate from D-erythrose 4-phosphate and phosphoenolpyruvate: step 7/7.</text>
</comment>
<comment type="subunit">
    <text evidence="1">Homotetramer.</text>
</comment>
<comment type="similarity">
    <text evidence="1">Belongs to the chorismate synthase family.</text>
</comment>
<keyword id="KW-0028">Amino-acid biosynthesis</keyword>
<keyword id="KW-0057">Aromatic amino acid biosynthesis</keyword>
<keyword id="KW-0274">FAD</keyword>
<keyword id="KW-0285">Flavoprotein</keyword>
<keyword id="KW-0288">FMN</keyword>
<keyword id="KW-0456">Lyase</keyword>
<keyword id="KW-0521">NADP</keyword>
<keyword id="KW-1185">Reference proteome</keyword>